<dbReference type="EC" id="2.4.2.18" evidence="1"/>
<dbReference type="EMBL" id="CP000029">
    <property type="protein sequence ID" value="AAW54336.1"/>
    <property type="molecule type" value="Genomic_DNA"/>
</dbReference>
<dbReference type="RefSeq" id="WP_001830976.1">
    <property type="nucleotide sequence ID" value="NC_002976.3"/>
</dbReference>
<dbReference type="SMR" id="Q5HPH3"/>
<dbReference type="STRING" id="176279.SERP0939"/>
<dbReference type="GeneID" id="50018823"/>
<dbReference type="KEGG" id="ser:SERP0939"/>
<dbReference type="eggNOG" id="COG0547">
    <property type="taxonomic scope" value="Bacteria"/>
</dbReference>
<dbReference type="HOGENOM" id="CLU_034315_3_0_9"/>
<dbReference type="UniPathway" id="UPA00035">
    <property type="reaction ID" value="UER00041"/>
</dbReference>
<dbReference type="Proteomes" id="UP000000531">
    <property type="component" value="Chromosome"/>
</dbReference>
<dbReference type="GO" id="GO:0005829">
    <property type="term" value="C:cytosol"/>
    <property type="evidence" value="ECO:0007669"/>
    <property type="project" value="TreeGrafter"/>
</dbReference>
<dbReference type="GO" id="GO:0004048">
    <property type="term" value="F:anthranilate phosphoribosyltransferase activity"/>
    <property type="evidence" value="ECO:0007669"/>
    <property type="project" value="UniProtKB-UniRule"/>
</dbReference>
<dbReference type="GO" id="GO:0000287">
    <property type="term" value="F:magnesium ion binding"/>
    <property type="evidence" value="ECO:0007669"/>
    <property type="project" value="UniProtKB-UniRule"/>
</dbReference>
<dbReference type="GO" id="GO:0000162">
    <property type="term" value="P:L-tryptophan biosynthetic process"/>
    <property type="evidence" value="ECO:0007669"/>
    <property type="project" value="UniProtKB-UniRule"/>
</dbReference>
<dbReference type="Gene3D" id="3.40.1030.10">
    <property type="entry name" value="Nucleoside phosphorylase/phosphoribosyltransferase catalytic domain"/>
    <property type="match status" value="1"/>
</dbReference>
<dbReference type="Gene3D" id="1.20.970.10">
    <property type="entry name" value="Transferase, Pyrimidine Nucleoside Phosphorylase, Chain C"/>
    <property type="match status" value="1"/>
</dbReference>
<dbReference type="HAMAP" id="MF_00211">
    <property type="entry name" value="TrpD"/>
    <property type="match status" value="1"/>
</dbReference>
<dbReference type="InterPro" id="IPR005940">
    <property type="entry name" value="Anthranilate_Pribosyl_Tfrase"/>
</dbReference>
<dbReference type="InterPro" id="IPR000312">
    <property type="entry name" value="Glycosyl_Trfase_fam3"/>
</dbReference>
<dbReference type="InterPro" id="IPR035902">
    <property type="entry name" value="Nuc_phospho_transferase"/>
</dbReference>
<dbReference type="NCBIfam" id="TIGR01245">
    <property type="entry name" value="trpD"/>
    <property type="match status" value="1"/>
</dbReference>
<dbReference type="PANTHER" id="PTHR43285">
    <property type="entry name" value="ANTHRANILATE PHOSPHORIBOSYLTRANSFERASE"/>
    <property type="match status" value="1"/>
</dbReference>
<dbReference type="PANTHER" id="PTHR43285:SF2">
    <property type="entry name" value="ANTHRANILATE PHOSPHORIBOSYLTRANSFERASE"/>
    <property type="match status" value="1"/>
</dbReference>
<dbReference type="Pfam" id="PF00591">
    <property type="entry name" value="Glycos_transf_3"/>
    <property type="match status" value="1"/>
</dbReference>
<dbReference type="SUPFAM" id="SSF52418">
    <property type="entry name" value="Nucleoside phosphorylase/phosphoribosyltransferase catalytic domain"/>
    <property type="match status" value="1"/>
</dbReference>
<keyword id="KW-0028">Amino-acid biosynthesis</keyword>
<keyword id="KW-0057">Aromatic amino acid biosynthesis</keyword>
<keyword id="KW-0328">Glycosyltransferase</keyword>
<keyword id="KW-0460">Magnesium</keyword>
<keyword id="KW-0479">Metal-binding</keyword>
<keyword id="KW-1185">Reference proteome</keyword>
<keyword id="KW-0808">Transferase</keyword>
<keyword id="KW-0822">Tryptophan biosynthesis</keyword>
<accession>Q5HPH3</accession>
<protein>
    <recommendedName>
        <fullName evidence="1">Anthranilate phosphoribosyltransferase</fullName>
        <ecNumber evidence="1">2.4.2.18</ecNumber>
    </recommendedName>
</protein>
<name>TRPD_STAEQ</name>
<organism>
    <name type="scientific">Staphylococcus epidermidis (strain ATCC 35984 / DSM 28319 / BCRC 17069 / CCUG 31568 / BM 3577 / RP62A)</name>
    <dbReference type="NCBI Taxonomy" id="176279"/>
    <lineage>
        <taxon>Bacteria</taxon>
        <taxon>Bacillati</taxon>
        <taxon>Bacillota</taxon>
        <taxon>Bacilli</taxon>
        <taxon>Bacillales</taxon>
        <taxon>Staphylococcaceae</taxon>
        <taxon>Staphylococcus</taxon>
    </lineage>
</organism>
<reference key="1">
    <citation type="journal article" date="2005" name="J. Bacteriol.">
        <title>Insights on evolution of virulence and resistance from the complete genome analysis of an early methicillin-resistant Staphylococcus aureus strain and a biofilm-producing methicillin-resistant Staphylococcus epidermidis strain.</title>
        <authorList>
            <person name="Gill S.R."/>
            <person name="Fouts D.E."/>
            <person name="Archer G.L."/>
            <person name="Mongodin E.F."/>
            <person name="DeBoy R.T."/>
            <person name="Ravel J."/>
            <person name="Paulsen I.T."/>
            <person name="Kolonay J.F."/>
            <person name="Brinkac L.M."/>
            <person name="Beanan M.J."/>
            <person name="Dodson R.J."/>
            <person name="Daugherty S.C."/>
            <person name="Madupu R."/>
            <person name="Angiuoli S.V."/>
            <person name="Durkin A.S."/>
            <person name="Haft D.H."/>
            <person name="Vamathevan J.J."/>
            <person name="Khouri H."/>
            <person name="Utterback T.R."/>
            <person name="Lee C."/>
            <person name="Dimitrov G."/>
            <person name="Jiang L."/>
            <person name="Qin H."/>
            <person name="Weidman J."/>
            <person name="Tran K."/>
            <person name="Kang K.H."/>
            <person name="Hance I.R."/>
            <person name="Nelson K.E."/>
            <person name="Fraser C.M."/>
        </authorList>
    </citation>
    <scope>NUCLEOTIDE SEQUENCE [LARGE SCALE GENOMIC DNA]</scope>
    <source>
        <strain>ATCC 35984 / DSM 28319 / BCRC 17069 / CCUG 31568 / BM 3577 / RP62A</strain>
    </source>
</reference>
<evidence type="ECO:0000255" key="1">
    <source>
        <dbReference type="HAMAP-Rule" id="MF_00211"/>
    </source>
</evidence>
<comment type="function">
    <text evidence="1">Catalyzes the transfer of the phosphoribosyl group of 5-phosphorylribose-1-pyrophosphate (PRPP) to anthranilate to yield N-(5'-phosphoribosyl)-anthranilate (PRA).</text>
</comment>
<comment type="catalytic activity">
    <reaction evidence="1">
        <text>N-(5-phospho-beta-D-ribosyl)anthranilate + diphosphate = 5-phospho-alpha-D-ribose 1-diphosphate + anthranilate</text>
        <dbReference type="Rhea" id="RHEA:11768"/>
        <dbReference type="ChEBI" id="CHEBI:16567"/>
        <dbReference type="ChEBI" id="CHEBI:18277"/>
        <dbReference type="ChEBI" id="CHEBI:33019"/>
        <dbReference type="ChEBI" id="CHEBI:58017"/>
        <dbReference type="EC" id="2.4.2.18"/>
    </reaction>
</comment>
<comment type="cofactor">
    <cofactor evidence="1">
        <name>Mg(2+)</name>
        <dbReference type="ChEBI" id="CHEBI:18420"/>
    </cofactor>
    <text evidence="1">Binds 2 magnesium ions per monomer.</text>
</comment>
<comment type="pathway">
    <text evidence="1">Amino-acid biosynthesis; L-tryptophan biosynthesis; L-tryptophan from chorismate: step 2/5.</text>
</comment>
<comment type="subunit">
    <text evidence="1">Homodimer.</text>
</comment>
<comment type="similarity">
    <text evidence="1">Belongs to the anthranilate phosphoribosyltransferase family.</text>
</comment>
<feature type="chain" id="PRO_0000154485" description="Anthranilate phosphoribosyltransferase">
    <location>
        <begin position="1"/>
        <end position="331"/>
    </location>
</feature>
<feature type="binding site" evidence="1">
    <location>
        <position position="78"/>
    </location>
    <ligand>
        <name>5-phospho-alpha-D-ribose 1-diphosphate</name>
        <dbReference type="ChEBI" id="CHEBI:58017"/>
    </ligand>
</feature>
<feature type="binding site" evidence="1">
    <location>
        <position position="78"/>
    </location>
    <ligand>
        <name>anthranilate</name>
        <dbReference type="ChEBI" id="CHEBI:16567"/>
        <label>1</label>
    </ligand>
</feature>
<feature type="binding site" evidence="1">
    <location>
        <begin position="81"/>
        <end position="82"/>
    </location>
    <ligand>
        <name>5-phospho-alpha-D-ribose 1-diphosphate</name>
        <dbReference type="ChEBI" id="CHEBI:58017"/>
    </ligand>
</feature>
<feature type="binding site" evidence="1">
    <location>
        <position position="86"/>
    </location>
    <ligand>
        <name>5-phospho-alpha-D-ribose 1-diphosphate</name>
        <dbReference type="ChEBI" id="CHEBI:58017"/>
    </ligand>
</feature>
<feature type="binding site" evidence="1">
    <location>
        <begin position="88"/>
        <end position="91"/>
    </location>
    <ligand>
        <name>5-phospho-alpha-D-ribose 1-diphosphate</name>
        <dbReference type="ChEBI" id="CHEBI:58017"/>
    </ligand>
</feature>
<feature type="binding site" evidence="1">
    <location>
        <position position="90"/>
    </location>
    <ligand>
        <name>Mg(2+)</name>
        <dbReference type="ChEBI" id="CHEBI:18420"/>
        <label>1</label>
    </ligand>
</feature>
<feature type="binding site" evidence="1">
    <location>
        <begin position="106"/>
        <end position="114"/>
    </location>
    <ligand>
        <name>5-phospho-alpha-D-ribose 1-diphosphate</name>
        <dbReference type="ChEBI" id="CHEBI:58017"/>
    </ligand>
</feature>
<feature type="binding site" evidence="1">
    <location>
        <position position="109"/>
    </location>
    <ligand>
        <name>anthranilate</name>
        <dbReference type="ChEBI" id="CHEBI:16567"/>
        <label>1</label>
    </ligand>
</feature>
<feature type="binding site" evidence="1">
    <location>
        <position position="118"/>
    </location>
    <ligand>
        <name>5-phospho-alpha-D-ribose 1-diphosphate</name>
        <dbReference type="ChEBI" id="CHEBI:58017"/>
    </ligand>
</feature>
<feature type="binding site" evidence="1">
    <location>
        <position position="163"/>
    </location>
    <ligand>
        <name>anthranilate</name>
        <dbReference type="ChEBI" id="CHEBI:16567"/>
        <label>2</label>
    </ligand>
</feature>
<feature type="binding site" evidence="1">
    <location>
        <position position="222"/>
    </location>
    <ligand>
        <name>Mg(2+)</name>
        <dbReference type="ChEBI" id="CHEBI:18420"/>
        <label>2</label>
    </ligand>
</feature>
<feature type="binding site" evidence="1">
    <location>
        <position position="223"/>
    </location>
    <ligand>
        <name>Mg(2+)</name>
        <dbReference type="ChEBI" id="CHEBI:18420"/>
        <label>1</label>
    </ligand>
</feature>
<feature type="binding site" evidence="1">
    <location>
        <position position="223"/>
    </location>
    <ligand>
        <name>Mg(2+)</name>
        <dbReference type="ChEBI" id="CHEBI:18420"/>
        <label>2</label>
    </ligand>
</feature>
<gene>
    <name evidence="1" type="primary">trpD</name>
    <name type="ordered locus">SERP0939</name>
</gene>
<sequence>MTLLEKIKQNKSLSKKDMQSFIVTLFDSNIETNVKVELLKAYTNKDMGQYELTYLVEYFIQTNYPNQPFYNKAMCVCGTGGDQSNSFNISTTVAFVVASAGVPVIKHGNKSITSHSGSTDVLHEMNIKTNKMNEVEQQLNLKGLAFISATDSYPMMKKLQSIRKSIATPTIFNLIGPLINPFKLTYQVMGVYEASQLENIAQTLKDLGRKRAILIHGANGMDEATLSGENIIYEVSSERALKKYSLKAEEVGLAYANNDTLIGGSPQTNKQIALNILSGTDHSSKRDVVLLNAGIALYVAEQVESIKHGVERAKYLIDTGMAMKQYLKMGG</sequence>
<proteinExistence type="inferred from homology"/>